<reference key="1">
    <citation type="journal article" date="1995" name="Plant Physiol.">
        <title>Cloning and sequence of a cDNA encoding phenylalanine ammonia-lyase from the tropical forage legume Stylosanthes humilis.</title>
        <authorList>
            <person name="Manners J.M."/>
            <person name="McIntyre C.L."/>
            <person name="Nourse J.P."/>
        </authorList>
    </citation>
    <scope>NUCLEOTIDE SEQUENCE [MRNA]</scope>
    <source>
        <strain>cv. Paterson</strain>
        <tissue>Stem</tissue>
    </source>
</reference>
<comment type="function">
    <text evidence="2">This is a key enzyme of plant metabolism catalyzing the first reaction in the biosynthesis from L-phenylalanine of a wide variety of natural products based on the phenylpropane skeleton.</text>
</comment>
<comment type="catalytic activity">
    <reaction evidence="2">
        <text>L-phenylalanine = (E)-cinnamate + NH4(+)</text>
        <dbReference type="Rhea" id="RHEA:21384"/>
        <dbReference type="ChEBI" id="CHEBI:15669"/>
        <dbReference type="ChEBI" id="CHEBI:28938"/>
        <dbReference type="ChEBI" id="CHEBI:58095"/>
        <dbReference type="EC" id="4.3.1.24"/>
    </reaction>
</comment>
<comment type="pathway">
    <text evidence="5">Phenylpropanoid metabolism; trans-cinnamate biosynthesis; trans-cinnamate from L-phenylalanine: step 1/1.</text>
</comment>
<comment type="subunit">
    <text evidence="2">Homotetramer.</text>
</comment>
<comment type="subcellular location">
    <subcellularLocation>
        <location evidence="5">Cytoplasm</location>
    </subcellularLocation>
</comment>
<comment type="PTM">
    <text evidence="3">Contains an active site 4-methylidene-imidazol-5-one (MIO), which is formed autocatalytically by cyclization and dehydration of residues Ala-Ser-Gly.</text>
</comment>
<comment type="similarity">
    <text evidence="5">Belongs to the PAL/histidase family.</text>
</comment>
<name>PALY_STYHU</name>
<organism>
    <name type="scientific">Stylosanthes humilis</name>
    <name type="common">Townsville stylo</name>
    <name type="synonym">Astyposanthes humilis</name>
    <dbReference type="NCBI Taxonomy" id="35628"/>
    <lineage>
        <taxon>Eukaryota</taxon>
        <taxon>Viridiplantae</taxon>
        <taxon>Streptophyta</taxon>
        <taxon>Embryophyta</taxon>
        <taxon>Tracheophyta</taxon>
        <taxon>Spermatophyta</taxon>
        <taxon>Magnoliopsida</taxon>
        <taxon>eudicotyledons</taxon>
        <taxon>Gunneridae</taxon>
        <taxon>Pentapetalae</taxon>
        <taxon>rosids</taxon>
        <taxon>fabids</taxon>
        <taxon>Fabales</taxon>
        <taxon>Fabaceae</taxon>
        <taxon>Papilionoideae</taxon>
        <taxon>50 kb inversion clade</taxon>
        <taxon>dalbergioids sensu lato</taxon>
        <taxon>Dalbergieae</taxon>
        <taxon>Pterocarpus clade</taxon>
        <taxon>Stylosanthes</taxon>
    </lineage>
</organism>
<sequence>MDTHANADATFCLTANNGQQPRHDPLNWAAAAEALKGSHLDEVKRMVSEYRKPLVNLGGQTLTISQVAAIAANDQGVSVQLSEASRAGVKASSDWVMDSMNNGTDSYGVTTGFGATSHRRTKQGGALQKELIRFLNAGIFGNGTETNCTLPHTATRAAMLVRINTLLQGYSGIRFEILEAITKLLNNNITPCLPLRGTITASGDLVPLSYIAGLLTGRPNSKAVGPNGETLNAKEAFQAAGIGSDFFELQPKEGLALVNGTPVGSGLASVVLFEANILAVLSEVLSAIFAEVMQGKPEFTDHLTHKLKHHPGQIEAAAIMEHILDGSSYVKAAKKLHEIDPLQKPKQDRYALRTSPQWLGPLVEVIRFSTKSIEREINSVNDNPLIDVSRNKALHGGNFQGTPIGVSMDNTRLAVASIGKLMFAQFSELVNDFYNNGLPSNLSASRNPSLDYGFKGTEIAMASYCSELQYLANPVTSHVQSAEQHNQDVNSLGLISARKTNEAVEILKLMSPTYLIALCQAIDLRHLEENLKNTVKNTVSQVAKRTLTTGVNGELHPSRFCEKDLLKIVDREYCFAYIDDPCSATYPLMQKLRQVLVEHALANAENEKNVNTSIFQKITTFEEELKTLLPKEVEGARIAYENGQSAIPNKIKECRSYPLYKFVREELGTEMLTGEKVRSPGEECDKLFTAMCQGKIIDPLLECIGEWNGAPLPLC</sequence>
<accession>P45732</accession>
<feature type="chain" id="PRO_0000215422" description="Phenylalanine ammonia-lyase">
    <location>
        <begin position="1"/>
        <end position="715"/>
    </location>
</feature>
<feature type="active site" description="Proton donor/acceptor" evidence="3">
    <location>
        <position position="107"/>
    </location>
</feature>
<feature type="binding site" evidence="3">
    <location>
        <position position="259"/>
    </location>
    <ligand>
        <name>(E)-cinnamate</name>
        <dbReference type="ChEBI" id="CHEBI:15669"/>
    </ligand>
</feature>
<feature type="binding site" evidence="3">
    <location>
        <position position="347"/>
    </location>
    <ligand>
        <name>(E)-cinnamate</name>
        <dbReference type="ChEBI" id="CHEBI:15669"/>
    </ligand>
</feature>
<feature type="binding site" evidence="3">
    <location>
        <position position="353"/>
    </location>
    <ligand>
        <name>(E)-cinnamate</name>
        <dbReference type="ChEBI" id="CHEBI:15669"/>
    </ligand>
</feature>
<feature type="binding site" evidence="3">
    <location>
        <position position="383"/>
    </location>
    <ligand>
        <name>(E)-cinnamate</name>
        <dbReference type="ChEBI" id="CHEBI:15669"/>
    </ligand>
</feature>
<feature type="binding site" evidence="1">
    <location>
        <position position="455"/>
    </location>
    <ligand>
        <name>(E)-cinnamate</name>
        <dbReference type="ChEBI" id="CHEBI:15669"/>
    </ligand>
</feature>
<feature type="binding site" evidence="1">
    <location>
        <position position="483"/>
    </location>
    <ligand>
        <name>(E)-cinnamate</name>
        <dbReference type="ChEBI" id="CHEBI:15669"/>
    </ligand>
</feature>
<feature type="binding site" evidence="3">
    <location>
        <position position="486"/>
    </location>
    <ligand>
        <name>(E)-cinnamate</name>
        <dbReference type="ChEBI" id="CHEBI:15669"/>
    </ligand>
</feature>
<feature type="modified residue" description="2,3-didehydroalanine (Ser)" evidence="4">
    <location>
        <position position="202"/>
    </location>
</feature>
<feature type="cross-link" description="5-imidazolinone (Ala-Gly)" evidence="3">
    <location>
        <begin position="201"/>
        <end position="203"/>
    </location>
</feature>
<keyword id="KW-0963">Cytoplasm</keyword>
<keyword id="KW-0456">Lyase</keyword>
<keyword id="KW-0585">Phenylalanine catabolism</keyword>
<keyword id="KW-0587">Phenylpropanoid metabolism</keyword>
<evidence type="ECO:0000250" key="1">
    <source>
        <dbReference type="UniProtKB" id="P11544"/>
    </source>
</evidence>
<evidence type="ECO:0000250" key="2">
    <source>
        <dbReference type="UniProtKB" id="P24481"/>
    </source>
</evidence>
<evidence type="ECO:0000250" key="3">
    <source>
        <dbReference type="UniProtKB" id="Q68G84"/>
    </source>
</evidence>
<evidence type="ECO:0000255" key="4">
    <source>
        <dbReference type="PROSITE-ProRule" id="PRU10122"/>
    </source>
</evidence>
<evidence type="ECO:0000305" key="5"/>
<proteinExistence type="evidence at transcript level"/>
<gene>
    <name type="primary">PAL17.1</name>
</gene>
<protein>
    <recommendedName>
        <fullName>Phenylalanine ammonia-lyase</fullName>
        <ecNumber evidence="2">4.3.1.24</ecNumber>
    </recommendedName>
</protein>
<dbReference type="EC" id="4.3.1.24" evidence="2"/>
<dbReference type="EMBL" id="L36822">
    <property type="protein sequence ID" value="AAA99500.1"/>
    <property type="molecule type" value="mRNA"/>
</dbReference>
<dbReference type="SMR" id="P45732"/>
<dbReference type="UniPathway" id="UPA00713">
    <property type="reaction ID" value="UER00725"/>
</dbReference>
<dbReference type="GO" id="GO:0005737">
    <property type="term" value="C:cytoplasm"/>
    <property type="evidence" value="ECO:0007669"/>
    <property type="project" value="UniProtKB-SubCell"/>
</dbReference>
<dbReference type="GO" id="GO:0045548">
    <property type="term" value="F:phenylalanine ammonia-lyase activity"/>
    <property type="evidence" value="ECO:0007669"/>
    <property type="project" value="UniProtKB-EC"/>
</dbReference>
<dbReference type="GO" id="GO:0009800">
    <property type="term" value="P:cinnamic acid biosynthetic process"/>
    <property type="evidence" value="ECO:0007669"/>
    <property type="project" value="UniProtKB-UniPathway"/>
</dbReference>
<dbReference type="GO" id="GO:0006559">
    <property type="term" value="P:L-phenylalanine catabolic process"/>
    <property type="evidence" value="ECO:0007669"/>
    <property type="project" value="UniProtKB-KW"/>
</dbReference>
<dbReference type="CDD" id="cd00332">
    <property type="entry name" value="PAL-HAL"/>
    <property type="match status" value="1"/>
</dbReference>
<dbReference type="FunFam" id="1.10.274.20:FF:000001">
    <property type="entry name" value="Phenylalanine ammonia-lyase"/>
    <property type="match status" value="1"/>
</dbReference>
<dbReference type="FunFam" id="1.10.275.10:FF:000009">
    <property type="entry name" value="Phenylalanine ammonia-lyase"/>
    <property type="match status" value="1"/>
</dbReference>
<dbReference type="FunFam" id="1.20.200.10:FF:000009">
    <property type="entry name" value="Phenylalanine ammonia-lyase"/>
    <property type="match status" value="1"/>
</dbReference>
<dbReference type="Gene3D" id="1.20.200.10">
    <property type="entry name" value="Fumarase/aspartase (Central domain)"/>
    <property type="match status" value="1"/>
</dbReference>
<dbReference type="Gene3D" id="1.10.275.10">
    <property type="entry name" value="Fumarase/aspartase (N-terminal domain)"/>
    <property type="match status" value="1"/>
</dbReference>
<dbReference type="Gene3D" id="1.10.274.20">
    <property type="entry name" value="Phenylalanine ammonia-lyase 1, domain 3"/>
    <property type="match status" value="1"/>
</dbReference>
<dbReference type="InterPro" id="IPR001106">
    <property type="entry name" value="Aromatic_Lyase"/>
</dbReference>
<dbReference type="InterPro" id="IPR024083">
    <property type="entry name" value="Fumarase/histidase_N"/>
</dbReference>
<dbReference type="InterPro" id="IPR008948">
    <property type="entry name" value="L-Aspartase-like"/>
</dbReference>
<dbReference type="InterPro" id="IPR022313">
    <property type="entry name" value="Phe/His_NH3-lyase_AS"/>
</dbReference>
<dbReference type="InterPro" id="IPR005922">
    <property type="entry name" value="Phe_NH3-lyase"/>
</dbReference>
<dbReference type="InterPro" id="IPR023144">
    <property type="entry name" value="Phe_NH3-lyase_shielding_dom_sf"/>
</dbReference>
<dbReference type="NCBIfam" id="TIGR01226">
    <property type="entry name" value="phe_am_lyase"/>
    <property type="match status" value="1"/>
</dbReference>
<dbReference type="PANTHER" id="PTHR10362">
    <property type="entry name" value="HISTIDINE AMMONIA-LYASE"/>
    <property type="match status" value="1"/>
</dbReference>
<dbReference type="Pfam" id="PF00221">
    <property type="entry name" value="Lyase_aromatic"/>
    <property type="match status" value="1"/>
</dbReference>
<dbReference type="SUPFAM" id="SSF48557">
    <property type="entry name" value="L-aspartase-like"/>
    <property type="match status" value="1"/>
</dbReference>
<dbReference type="PROSITE" id="PS00488">
    <property type="entry name" value="PAL_HISTIDASE"/>
    <property type="match status" value="1"/>
</dbReference>